<evidence type="ECO:0000255" key="1">
    <source>
        <dbReference type="HAMAP-Rule" id="MF_01405"/>
    </source>
</evidence>
<reference key="1">
    <citation type="journal article" date="2007" name="Science">
        <title>Legumes symbioses: absence of nod genes in photosynthetic bradyrhizobia.</title>
        <authorList>
            <person name="Giraud E."/>
            <person name="Moulin L."/>
            <person name="Vallenet D."/>
            <person name="Barbe V."/>
            <person name="Cytryn E."/>
            <person name="Avarre J.-C."/>
            <person name="Jaubert M."/>
            <person name="Simon D."/>
            <person name="Cartieaux F."/>
            <person name="Prin Y."/>
            <person name="Bena G."/>
            <person name="Hannibal L."/>
            <person name="Fardoux J."/>
            <person name="Kojadinovic M."/>
            <person name="Vuillet L."/>
            <person name="Lajus A."/>
            <person name="Cruveiller S."/>
            <person name="Rouy Z."/>
            <person name="Mangenot S."/>
            <person name="Segurens B."/>
            <person name="Dossat C."/>
            <person name="Franck W.L."/>
            <person name="Chang W.-S."/>
            <person name="Saunders E."/>
            <person name="Bruce D."/>
            <person name="Richardson P."/>
            <person name="Normand P."/>
            <person name="Dreyfus B."/>
            <person name="Pignol D."/>
            <person name="Stacey G."/>
            <person name="Emerich D."/>
            <person name="Vermeglio A."/>
            <person name="Medigue C."/>
            <person name="Sadowsky M."/>
        </authorList>
    </citation>
    <scope>NUCLEOTIDE SEQUENCE [LARGE SCALE GENOMIC DNA]</scope>
    <source>
        <strain>BTAi1 / ATCC BAA-1182</strain>
    </source>
</reference>
<name>IXTPA_BRASB</name>
<feature type="chain" id="PRO_1000087376" description="dITP/XTP pyrophosphatase">
    <location>
        <begin position="1"/>
        <end position="214"/>
    </location>
</feature>
<feature type="active site" description="Proton acceptor" evidence="1">
    <location>
        <position position="77"/>
    </location>
</feature>
<feature type="binding site" evidence="1">
    <location>
        <begin position="16"/>
        <end position="21"/>
    </location>
    <ligand>
        <name>substrate</name>
    </ligand>
</feature>
<feature type="binding site" evidence="1">
    <location>
        <position position="48"/>
    </location>
    <ligand>
        <name>Mg(2+)</name>
        <dbReference type="ChEBI" id="CHEBI:18420"/>
    </ligand>
</feature>
<feature type="binding site" evidence="1">
    <location>
        <position position="77"/>
    </location>
    <ligand>
        <name>Mg(2+)</name>
        <dbReference type="ChEBI" id="CHEBI:18420"/>
    </ligand>
</feature>
<feature type="binding site" evidence="1">
    <location>
        <position position="78"/>
    </location>
    <ligand>
        <name>substrate</name>
    </ligand>
</feature>
<feature type="binding site" evidence="1">
    <location>
        <begin position="163"/>
        <end position="166"/>
    </location>
    <ligand>
        <name>substrate</name>
    </ligand>
</feature>
<feature type="binding site" evidence="1">
    <location>
        <position position="186"/>
    </location>
    <ligand>
        <name>substrate</name>
    </ligand>
</feature>
<feature type="binding site" evidence="1">
    <location>
        <begin position="198"/>
        <end position="199"/>
    </location>
    <ligand>
        <name>substrate</name>
    </ligand>
</feature>
<keyword id="KW-0378">Hydrolase</keyword>
<keyword id="KW-0460">Magnesium</keyword>
<keyword id="KW-0479">Metal-binding</keyword>
<keyword id="KW-0546">Nucleotide metabolism</keyword>
<keyword id="KW-0547">Nucleotide-binding</keyword>
<keyword id="KW-1185">Reference proteome</keyword>
<organism>
    <name type="scientific">Bradyrhizobium sp. (strain BTAi1 / ATCC BAA-1182)</name>
    <dbReference type="NCBI Taxonomy" id="288000"/>
    <lineage>
        <taxon>Bacteria</taxon>
        <taxon>Pseudomonadati</taxon>
        <taxon>Pseudomonadota</taxon>
        <taxon>Alphaproteobacteria</taxon>
        <taxon>Hyphomicrobiales</taxon>
        <taxon>Nitrobacteraceae</taxon>
        <taxon>Bradyrhizobium</taxon>
    </lineage>
</organism>
<comment type="function">
    <text evidence="1">Pyrophosphatase that catalyzes the hydrolysis of nucleoside triphosphates to their monophosphate derivatives, with a high preference for the non-canonical purine nucleotides XTP (xanthosine triphosphate), dITP (deoxyinosine triphosphate) and ITP. Seems to function as a house-cleaning enzyme that removes non-canonical purine nucleotides from the nucleotide pool, thus preventing their incorporation into DNA/RNA and avoiding chromosomal lesions.</text>
</comment>
<comment type="catalytic activity">
    <reaction evidence="1">
        <text>XTP + H2O = XMP + diphosphate + H(+)</text>
        <dbReference type="Rhea" id="RHEA:28610"/>
        <dbReference type="ChEBI" id="CHEBI:15377"/>
        <dbReference type="ChEBI" id="CHEBI:15378"/>
        <dbReference type="ChEBI" id="CHEBI:33019"/>
        <dbReference type="ChEBI" id="CHEBI:57464"/>
        <dbReference type="ChEBI" id="CHEBI:61314"/>
        <dbReference type="EC" id="3.6.1.66"/>
    </reaction>
</comment>
<comment type="catalytic activity">
    <reaction evidence="1">
        <text>dITP + H2O = dIMP + diphosphate + H(+)</text>
        <dbReference type="Rhea" id="RHEA:28342"/>
        <dbReference type="ChEBI" id="CHEBI:15377"/>
        <dbReference type="ChEBI" id="CHEBI:15378"/>
        <dbReference type="ChEBI" id="CHEBI:33019"/>
        <dbReference type="ChEBI" id="CHEBI:61194"/>
        <dbReference type="ChEBI" id="CHEBI:61382"/>
        <dbReference type="EC" id="3.6.1.66"/>
    </reaction>
</comment>
<comment type="catalytic activity">
    <reaction evidence="1">
        <text>ITP + H2O = IMP + diphosphate + H(+)</text>
        <dbReference type="Rhea" id="RHEA:29399"/>
        <dbReference type="ChEBI" id="CHEBI:15377"/>
        <dbReference type="ChEBI" id="CHEBI:15378"/>
        <dbReference type="ChEBI" id="CHEBI:33019"/>
        <dbReference type="ChEBI" id="CHEBI:58053"/>
        <dbReference type="ChEBI" id="CHEBI:61402"/>
        <dbReference type="EC" id="3.6.1.66"/>
    </reaction>
</comment>
<comment type="cofactor">
    <cofactor evidence="1">
        <name>Mg(2+)</name>
        <dbReference type="ChEBI" id="CHEBI:18420"/>
    </cofactor>
    <text evidence="1">Binds 1 Mg(2+) ion per subunit.</text>
</comment>
<comment type="subunit">
    <text evidence="1">Homodimer.</text>
</comment>
<comment type="similarity">
    <text evidence="1">Belongs to the HAM1 NTPase family.</text>
</comment>
<dbReference type="EC" id="3.6.1.66" evidence="1"/>
<dbReference type="EMBL" id="CP000494">
    <property type="protein sequence ID" value="ABQ32482.1"/>
    <property type="molecule type" value="Genomic_DNA"/>
</dbReference>
<dbReference type="RefSeq" id="WP_011942702.1">
    <property type="nucleotide sequence ID" value="NC_009485.1"/>
</dbReference>
<dbReference type="SMR" id="A5E8I8"/>
<dbReference type="STRING" id="288000.BBta_0185"/>
<dbReference type="KEGG" id="bbt:BBta_0185"/>
<dbReference type="eggNOG" id="COG0127">
    <property type="taxonomic scope" value="Bacteria"/>
</dbReference>
<dbReference type="HOGENOM" id="CLU_082080_0_0_5"/>
<dbReference type="OrthoDB" id="9807456at2"/>
<dbReference type="Proteomes" id="UP000000246">
    <property type="component" value="Chromosome"/>
</dbReference>
<dbReference type="GO" id="GO:0005829">
    <property type="term" value="C:cytosol"/>
    <property type="evidence" value="ECO:0007669"/>
    <property type="project" value="TreeGrafter"/>
</dbReference>
<dbReference type="GO" id="GO:0035870">
    <property type="term" value="F:dITP diphosphatase activity"/>
    <property type="evidence" value="ECO:0007669"/>
    <property type="project" value="RHEA"/>
</dbReference>
<dbReference type="GO" id="GO:0036220">
    <property type="term" value="F:ITP diphosphatase activity"/>
    <property type="evidence" value="ECO:0007669"/>
    <property type="project" value="UniProtKB-EC"/>
</dbReference>
<dbReference type="GO" id="GO:0046872">
    <property type="term" value="F:metal ion binding"/>
    <property type="evidence" value="ECO:0007669"/>
    <property type="project" value="UniProtKB-KW"/>
</dbReference>
<dbReference type="GO" id="GO:0000166">
    <property type="term" value="F:nucleotide binding"/>
    <property type="evidence" value="ECO:0007669"/>
    <property type="project" value="UniProtKB-KW"/>
</dbReference>
<dbReference type="GO" id="GO:0017111">
    <property type="term" value="F:ribonucleoside triphosphate phosphatase activity"/>
    <property type="evidence" value="ECO:0007669"/>
    <property type="project" value="InterPro"/>
</dbReference>
<dbReference type="GO" id="GO:0036222">
    <property type="term" value="F:XTP diphosphatase activity"/>
    <property type="evidence" value="ECO:0007669"/>
    <property type="project" value="RHEA"/>
</dbReference>
<dbReference type="GO" id="GO:0009117">
    <property type="term" value="P:nucleotide metabolic process"/>
    <property type="evidence" value="ECO:0007669"/>
    <property type="project" value="UniProtKB-KW"/>
</dbReference>
<dbReference type="GO" id="GO:0009146">
    <property type="term" value="P:purine nucleoside triphosphate catabolic process"/>
    <property type="evidence" value="ECO:0007669"/>
    <property type="project" value="UniProtKB-UniRule"/>
</dbReference>
<dbReference type="CDD" id="cd00515">
    <property type="entry name" value="HAM1"/>
    <property type="match status" value="1"/>
</dbReference>
<dbReference type="FunFam" id="3.90.950.10:FF:000001">
    <property type="entry name" value="dITP/XTP pyrophosphatase"/>
    <property type="match status" value="1"/>
</dbReference>
<dbReference type="Gene3D" id="3.90.950.10">
    <property type="match status" value="1"/>
</dbReference>
<dbReference type="HAMAP" id="MF_01405">
    <property type="entry name" value="Non_canon_purine_NTPase"/>
    <property type="match status" value="1"/>
</dbReference>
<dbReference type="InterPro" id="IPR020922">
    <property type="entry name" value="dITP/XTP_pyrophosphatase"/>
</dbReference>
<dbReference type="InterPro" id="IPR029001">
    <property type="entry name" value="ITPase-like_fam"/>
</dbReference>
<dbReference type="InterPro" id="IPR002637">
    <property type="entry name" value="RdgB/HAM1"/>
</dbReference>
<dbReference type="NCBIfam" id="TIGR00042">
    <property type="entry name" value="RdgB/HAM1 family non-canonical purine NTP pyrophosphatase"/>
    <property type="match status" value="1"/>
</dbReference>
<dbReference type="PANTHER" id="PTHR11067:SF9">
    <property type="entry name" value="INOSINE TRIPHOSPHATE PYROPHOSPHATASE"/>
    <property type="match status" value="1"/>
</dbReference>
<dbReference type="PANTHER" id="PTHR11067">
    <property type="entry name" value="INOSINE TRIPHOSPHATE PYROPHOSPHATASE/HAM1 PROTEIN"/>
    <property type="match status" value="1"/>
</dbReference>
<dbReference type="Pfam" id="PF01725">
    <property type="entry name" value="Ham1p_like"/>
    <property type="match status" value="1"/>
</dbReference>
<dbReference type="SUPFAM" id="SSF52972">
    <property type="entry name" value="ITPase-like"/>
    <property type="match status" value="1"/>
</dbReference>
<proteinExistence type="inferred from homology"/>
<protein>
    <recommendedName>
        <fullName evidence="1">dITP/XTP pyrophosphatase</fullName>
        <ecNumber evidence="1">3.6.1.66</ecNumber>
    </recommendedName>
    <alternativeName>
        <fullName evidence="1">Non-canonical purine NTP pyrophosphatase</fullName>
    </alternativeName>
    <alternativeName>
        <fullName evidence="1">Non-standard purine NTP pyrophosphatase</fullName>
    </alternativeName>
    <alternativeName>
        <fullName evidence="1">Nucleoside-triphosphate diphosphatase</fullName>
    </alternativeName>
    <alternativeName>
        <fullName evidence="1">Nucleoside-triphosphate pyrophosphatase</fullName>
        <shortName evidence="1">NTPase</shortName>
    </alternativeName>
</protein>
<sequence length="214" mass="22849">MSSSHRKLSGRIVIATHNPGKLAEMRELLAPYGVEAVSAGELSLGEPDETGETFQANARIKAVAAADAAQLPAFADDSGIVVHALDGAPGIYSARWAGPDKDFTAAMTRIERLLQERGATGPDKRGAHFVSALCVAWPDGHVEEVEARVDGTLVWPPRGSAGFGYDPMFLPEGHDRTFGEMTSLEKHGLPPLGLGLSHRARAFVKLAEICLDQR</sequence>
<accession>A5E8I8</accession>
<gene>
    <name type="ordered locus">BBta_0185</name>
</gene>